<feature type="chain" id="PRO_0000271907" description="Ribosomal RNA small subunit methyltransferase A">
    <location>
        <begin position="1"/>
        <end position="275"/>
    </location>
</feature>
<feature type="binding site" evidence="1">
    <location>
        <position position="19"/>
    </location>
    <ligand>
        <name>S-adenosyl-L-methionine</name>
        <dbReference type="ChEBI" id="CHEBI:59789"/>
    </ligand>
</feature>
<feature type="binding site" evidence="1">
    <location>
        <position position="21"/>
    </location>
    <ligand>
        <name>S-adenosyl-L-methionine</name>
        <dbReference type="ChEBI" id="CHEBI:59789"/>
    </ligand>
</feature>
<feature type="binding site" evidence="1">
    <location>
        <position position="46"/>
    </location>
    <ligand>
        <name>S-adenosyl-L-methionine</name>
        <dbReference type="ChEBI" id="CHEBI:59789"/>
    </ligand>
</feature>
<feature type="binding site" evidence="1">
    <location>
        <position position="71"/>
    </location>
    <ligand>
        <name>S-adenosyl-L-methionine</name>
        <dbReference type="ChEBI" id="CHEBI:59789"/>
    </ligand>
</feature>
<feature type="binding site" evidence="1">
    <location>
        <position position="94"/>
    </location>
    <ligand>
        <name>S-adenosyl-L-methionine</name>
        <dbReference type="ChEBI" id="CHEBI:59789"/>
    </ligand>
</feature>
<feature type="binding site" evidence="1">
    <location>
        <position position="117"/>
    </location>
    <ligand>
        <name>S-adenosyl-L-methionine</name>
        <dbReference type="ChEBI" id="CHEBI:59789"/>
    </ligand>
</feature>
<gene>
    <name evidence="1" type="primary">rsmA</name>
    <name evidence="1" type="synonym">ksgA</name>
    <name type="ordered locus">Bcen_2096</name>
</gene>
<proteinExistence type="inferred from homology"/>
<protein>
    <recommendedName>
        <fullName evidence="1">Ribosomal RNA small subunit methyltransferase A</fullName>
        <ecNumber evidence="1">2.1.1.182</ecNumber>
    </recommendedName>
    <alternativeName>
        <fullName evidence="1">16S rRNA (adenine(1518)-N(6)/adenine(1519)-N(6))-dimethyltransferase</fullName>
    </alternativeName>
    <alternativeName>
        <fullName evidence="1">16S rRNA dimethyladenosine transferase</fullName>
    </alternativeName>
    <alternativeName>
        <fullName evidence="1">16S rRNA dimethylase</fullName>
    </alternativeName>
    <alternativeName>
        <fullName evidence="1">S-adenosylmethionine-6-N', N'-adenosyl(rRNA) dimethyltransferase</fullName>
    </alternativeName>
</protein>
<keyword id="KW-0963">Cytoplasm</keyword>
<keyword id="KW-0489">Methyltransferase</keyword>
<keyword id="KW-0694">RNA-binding</keyword>
<keyword id="KW-0698">rRNA processing</keyword>
<keyword id="KW-0949">S-adenosyl-L-methionine</keyword>
<keyword id="KW-0808">Transferase</keyword>
<name>RSMA_BURO1</name>
<evidence type="ECO:0000255" key="1">
    <source>
        <dbReference type="HAMAP-Rule" id="MF_00607"/>
    </source>
</evidence>
<reference key="1">
    <citation type="submission" date="2006-05" db="EMBL/GenBank/DDBJ databases">
        <title>Complete sequence of chromosome 1 of Burkholderia cenocepacia AU 1054.</title>
        <authorList>
            <consortium name="US DOE Joint Genome Institute"/>
            <person name="Copeland A."/>
            <person name="Lucas S."/>
            <person name="Lapidus A."/>
            <person name="Barry K."/>
            <person name="Detter J.C."/>
            <person name="Glavina del Rio T."/>
            <person name="Hammon N."/>
            <person name="Israni S."/>
            <person name="Dalin E."/>
            <person name="Tice H."/>
            <person name="Pitluck S."/>
            <person name="Chain P."/>
            <person name="Malfatti S."/>
            <person name="Shin M."/>
            <person name="Vergez L."/>
            <person name="Schmutz J."/>
            <person name="Larimer F."/>
            <person name="Land M."/>
            <person name="Hauser L."/>
            <person name="Kyrpides N."/>
            <person name="Lykidis A."/>
            <person name="LiPuma J.J."/>
            <person name="Konstantinidis K."/>
            <person name="Tiedje J.M."/>
            <person name="Richardson P."/>
        </authorList>
    </citation>
    <scope>NUCLEOTIDE SEQUENCE [LARGE SCALE GENOMIC DNA]</scope>
    <source>
        <strain>AU 1054</strain>
    </source>
</reference>
<comment type="function">
    <text evidence="1">Specifically dimethylates two adjacent adenosines (A1518 and A1519) in the loop of a conserved hairpin near the 3'-end of 16S rRNA in the 30S particle. May play a critical role in biogenesis of 30S subunits.</text>
</comment>
<comment type="catalytic activity">
    <reaction evidence="1">
        <text>adenosine(1518)/adenosine(1519) in 16S rRNA + 4 S-adenosyl-L-methionine = N(6)-dimethyladenosine(1518)/N(6)-dimethyladenosine(1519) in 16S rRNA + 4 S-adenosyl-L-homocysteine + 4 H(+)</text>
        <dbReference type="Rhea" id="RHEA:19609"/>
        <dbReference type="Rhea" id="RHEA-COMP:10232"/>
        <dbReference type="Rhea" id="RHEA-COMP:10233"/>
        <dbReference type="ChEBI" id="CHEBI:15378"/>
        <dbReference type="ChEBI" id="CHEBI:57856"/>
        <dbReference type="ChEBI" id="CHEBI:59789"/>
        <dbReference type="ChEBI" id="CHEBI:74411"/>
        <dbReference type="ChEBI" id="CHEBI:74493"/>
        <dbReference type="EC" id="2.1.1.182"/>
    </reaction>
</comment>
<comment type="subcellular location">
    <subcellularLocation>
        <location evidence="1">Cytoplasm</location>
    </subcellularLocation>
</comment>
<comment type="similarity">
    <text evidence="1">Belongs to the class I-like SAM-binding methyltransferase superfamily. rRNA adenine N(6)-methyltransferase family. RsmA subfamily.</text>
</comment>
<organism>
    <name type="scientific">Burkholderia orbicola (strain AU 1054)</name>
    <dbReference type="NCBI Taxonomy" id="331271"/>
    <lineage>
        <taxon>Bacteria</taxon>
        <taxon>Pseudomonadati</taxon>
        <taxon>Pseudomonadota</taxon>
        <taxon>Betaproteobacteria</taxon>
        <taxon>Burkholderiales</taxon>
        <taxon>Burkholderiaceae</taxon>
        <taxon>Burkholderia</taxon>
        <taxon>Burkholderia cepacia complex</taxon>
        <taxon>Burkholderia orbicola</taxon>
    </lineage>
</organism>
<sequence>MSNSRQHQGHFARKRFGQNFLVDHGVIDSIVATIGPARGQRMVEIGPGLGALTGPLIERLATPESPLHAVELDRDLIGRLQQRFGALLELHAGDALAFDFRSLAAPGDKPSLRIVGNLPYNISSPLLFHLMTFADAVIDQHFMLQNEVVERMVAEPGTKAFSRLSVMLQYRYVMEKMLDVPPESFQPPPKVDSAIVRMIPYEPHELPDVDPVLLGEIVTAAFSQRRKMLRNTLGDYRETIDFDALGFDLARRAEDVSVAEYVGVAQALAALRKAG</sequence>
<accession>Q1BTQ8</accession>
<dbReference type="EC" id="2.1.1.182" evidence="1"/>
<dbReference type="EMBL" id="CP000378">
    <property type="protein sequence ID" value="ABF76997.1"/>
    <property type="molecule type" value="Genomic_DNA"/>
</dbReference>
<dbReference type="SMR" id="Q1BTQ8"/>
<dbReference type="HOGENOM" id="CLU_041220_0_1_4"/>
<dbReference type="GO" id="GO:0005829">
    <property type="term" value="C:cytosol"/>
    <property type="evidence" value="ECO:0007669"/>
    <property type="project" value="TreeGrafter"/>
</dbReference>
<dbReference type="GO" id="GO:0052908">
    <property type="term" value="F:16S rRNA (adenine(1518)-N(6)/adenine(1519)-N(6))-dimethyltransferase activity"/>
    <property type="evidence" value="ECO:0007669"/>
    <property type="project" value="UniProtKB-EC"/>
</dbReference>
<dbReference type="GO" id="GO:0003723">
    <property type="term" value="F:RNA binding"/>
    <property type="evidence" value="ECO:0007669"/>
    <property type="project" value="UniProtKB-KW"/>
</dbReference>
<dbReference type="FunFam" id="1.10.8.100:FF:000001">
    <property type="entry name" value="Ribosomal RNA small subunit methyltransferase A"/>
    <property type="match status" value="1"/>
</dbReference>
<dbReference type="Gene3D" id="1.10.8.100">
    <property type="entry name" value="Ribosomal RNA adenine dimethylase-like, domain 2"/>
    <property type="match status" value="1"/>
</dbReference>
<dbReference type="Gene3D" id="3.40.50.150">
    <property type="entry name" value="Vaccinia Virus protein VP39"/>
    <property type="match status" value="1"/>
</dbReference>
<dbReference type="HAMAP" id="MF_00607">
    <property type="entry name" value="16SrRNA_methyltr_A"/>
    <property type="match status" value="1"/>
</dbReference>
<dbReference type="InterPro" id="IPR001737">
    <property type="entry name" value="KsgA/Erm"/>
</dbReference>
<dbReference type="InterPro" id="IPR023165">
    <property type="entry name" value="rRNA_Ade_diMease-like_C"/>
</dbReference>
<dbReference type="InterPro" id="IPR020598">
    <property type="entry name" value="rRNA_Ade_methylase_Trfase_N"/>
</dbReference>
<dbReference type="InterPro" id="IPR011530">
    <property type="entry name" value="rRNA_adenine_dimethylase"/>
</dbReference>
<dbReference type="InterPro" id="IPR029063">
    <property type="entry name" value="SAM-dependent_MTases_sf"/>
</dbReference>
<dbReference type="NCBIfam" id="TIGR00755">
    <property type="entry name" value="ksgA"/>
    <property type="match status" value="1"/>
</dbReference>
<dbReference type="PANTHER" id="PTHR11727">
    <property type="entry name" value="DIMETHYLADENOSINE TRANSFERASE"/>
    <property type="match status" value="1"/>
</dbReference>
<dbReference type="PANTHER" id="PTHR11727:SF7">
    <property type="entry name" value="DIMETHYLADENOSINE TRANSFERASE-RELATED"/>
    <property type="match status" value="1"/>
</dbReference>
<dbReference type="Pfam" id="PF00398">
    <property type="entry name" value="RrnaAD"/>
    <property type="match status" value="1"/>
</dbReference>
<dbReference type="SMART" id="SM00650">
    <property type="entry name" value="rADc"/>
    <property type="match status" value="1"/>
</dbReference>
<dbReference type="SUPFAM" id="SSF53335">
    <property type="entry name" value="S-adenosyl-L-methionine-dependent methyltransferases"/>
    <property type="match status" value="1"/>
</dbReference>
<dbReference type="PROSITE" id="PS51689">
    <property type="entry name" value="SAM_RNA_A_N6_MT"/>
    <property type="match status" value="1"/>
</dbReference>